<gene>
    <name evidence="1" type="primary">fruA</name>
    <name type="ordered locus">HI_0446</name>
</gene>
<evidence type="ECO:0000250" key="1">
    <source>
        <dbReference type="UniProtKB" id="P20966"/>
    </source>
</evidence>
<evidence type="ECO:0000250" key="2">
    <source>
        <dbReference type="UniProtKB" id="P23355"/>
    </source>
</evidence>
<evidence type="ECO:0000255" key="3">
    <source>
        <dbReference type="PROSITE-ProRule" id="PRU00422"/>
    </source>
</evidence>
<evidence type="ECO:0000255" key="4">
    <source>
        <dbReference type="PROSITE-ProRule" id="PRU00427"/>
    </source>
</evidence>
<evidence type="ECO:0000305" key="5"/>
<accession>P44714</accession>
<keyword id="KW-0997">Cell inner membrane</keyword>
<keyword id="KW-1003">Cell membrane</keyword>
<keyword id="KW-0418">Kinase</keyword>
<keyword id="KW-0472">Membrane</keyword>
<keyword id="KW-0597">Phosphoprotein</keyword>
<keyword id="KW-0598">Phosphotransferase system</keyword>
<keyword id="KW-1185">Reference proteome</keyword>
<keyword id="KW-0677">Repeat</keyword>
<keyword id="KW-0762">Sugar transport</keyword>
<keyword id="KW-0808">Transferase</keyword>
<keyword id="KW-0812">Transmembrane</keyword>
<keyword id="KW-1133">Transmembrane helix</keyword>
<keyword id="KW-0813">Transport</keyword>
<reference key="1">
    <citation type="journal article" date="1995" name="Science">
        <title>Whole-genome random sequencing and assembly of Haemophilus influenzae Rd.</title>
        <authorList>
            <person name="Fleischmann R.D."/>
            <person name="Adams M.D."/>
            <person name="White O."/>
            <person name="Clayton R.A."/>
            <person name="Kirkness E.F."/>
            <person name="Kerlavage A.R."/>
            <person name="Bult C.J."/>
            <person name="Tomb J.-F."/>
            <person name="Dougherty B.A."/>
            <person name="Merrick J.M."/>
            <person name="McKenney K."/>
            <person name="Sutton G.G."/>
            <person name="FitzHugh W."/>
            <person name="Fields C.A."/>
            <person name="Gocayne J.D."/>
            <person name="Scott J.D."/>
            <person name="Shirley R."/>
            <person name="Liu L.-I."/>
            <person name="Glodek A."/>
            <person name="Kelley J.M."/>
            <person name="Weidman J.F."/>
            <person name="Phillips C.A."/>
            <person name="Spriggs T."/>
            <person name="Hedblom E."/>
            <person name="Cotton M.D."/>
            <person name="Utterback T.R."/>
            <person name="Hanna M.C."/>
            <person name="Nguyen D.T."/>
            <person name="Saudek D.M."/>
            <person name="Brandon R.C."/>
            <person name="Fine L.D."/>
            <person name="Fritchman J.L."/>
            <person name="Fuhrmann J.L."/>
            <person name="Geoghagen N.S.M."/>
            <person name="Gnehm C.L."/>
            <person name="McDonald L.A."/>
            <person name="Small K.V."/>
            <person name="Fraser C.M."/>
            <person name="Smith H.O."/>
            <person name="Venter J.C."/>
        </authorList>
    </citation>
    <scope>NUCLEOTIDE SEQUENCE [LARGE SCALE GENOMIC DNA]</scope>
    <source>
        <strain>ATCC 51907 / DSM 11121 / KW20 / Rd</strain>
    </source>
</reference>
<sequence>MKLFLTQSANVGDVKAYLLHEVFRAAAQKANVSIVGTPAEADLVLVFGSVLPNNPDLVGKKVFIIGEAIAMISPEVTLANALANGADYVAPKSAVSFTGVSGVKNIVAVTACPTGVAHTFMSAEAIEAYAKKQGWNVKVETRGQVGAGNEITVEEVAAADLVFVAADIDVPLDKFKGKPMYRTSTGLALKKTEQEFDKAFKEAKIFDGGNNAGTKEESREKKGVYKHLMTGVSHMLPLVVAGGLLIAISFMFSFNVIENTGVFQDLPNMLINIGSGVAFKLMIAVFAGYVAFSIADRPGLAVGLIAGMLASEAGAGILGGIIAGFLAGYVVKGLNVIIRLPASLTSLKPILILPLLGSMIVGLTMIYLINPPVAEIMKELSNWLTSMGEVNAIVLGAIIGAMMCIDMGGPVNKAAYTFSVGLIASQVYTPMAAAMAAGMVPPIGMTVATWIARNKFTVSQCDAGKASFVLGLCFISEGALPFVAADPIRVIISSVIGGAVAGAISMGLNITLQAPHGGLFVIPFVSEPLKYLGAIAIGALSTGVVYAIIKSKNNAE</sequence>
<dbReference type="EC" id="2.7.1.202" evidence="1"/>
<dbReference type="EMBL" id="L42023">
    <property type="protein sequence ID" value="AAC22105.1"/>
    <property type="molecule type" value="Genomic_DNA"/>
</dbReference>
<dbReference type="PIR" id="I64068">
    <property type="entry name" value="I64068"/>
</dbReference>
<dbReference type="RefSeq" id="NP_438607.1">
    <property type="nucleotide sequence ID" value="NC_000907.1"/>
</dbReference>
<dbReference type="SMR" id="P44714"/>
<dbReference type="STRING" id="71421.HI_0446"/>
<dbReference type="EnsemblBacteria" id="AAC22105">
    <property type="protein sequence ID" value="AAC22105"/>
    <property type="gene ID" value="HI_0446"/>
</dbReference>
<dbReference type="KEGG" id="hin:HI_0446"/>
<dbReference type="PATRIC" id="fig|71421.8.peg.466"/>
<dbReference type="eggNOG" id="COG1299">
    <property type="taxonomic scope" value="Bacteria"/>
</dbReference>
<dbReference type="eggNOG" id="COG1445">
    <property type="taxonomic scope" value="Bacteria"/>
</dbReference>
<dbReference type="eggNOG" id="COG3925">
    <property type="taxonomic scope" value="Bacteria"/>
</dbReference>
<dbReference type="HOGENOM" id="CLU_013155_4_1_6"/>
<dbReference type="OrthoDB" id="9782569at2"/>
<dbReference type="PhylomeDB" id="P44714"/>
<dbReference type="BioCyc" id="HINF71421:G1GJ1-462-MONOMER"/>
<dbReference type="Proteomes" id="UP000000579">
    <property type="component" value="Chromosome"/>
</dbReference>
<dbReference type="GO" id="GO:0005886">
    <property type="term" value="C:plasma membrane"/>
    <property type="evidence" value="ECO:0000318"/>
    <property type="project" value="GO_Central"/>
</dbReference>
<dbReference type="GO" id="GO:0005351">
    <property type="term" value="F:carbohydrate:proton symporter activity"/>
    <property type="evidence" value="ECO:0007669"/>
    <property type="project" value="InterPro"/>
</dbReference>
<dbReference type="GO" id="GO:0016301">
    <property type="term" value="F:kinase activity"/>
    <property type="evidence" value="ECO:0007669"/>
    <property type="project" value="UniProtKB-KW"/>
</dbReference>
<dbReference type="GO" id="GO:0022877">
    <property type="term" value="F:protein-N(PI)-phosphohistidine-fructose phosphotransferase system transporter activity"/>
    <property type="evidence" value="ECO:0007669"/>
    <property type="project" value="InterPro"/>
</dbReference>
<dbReference type="GO" id="GO:0090582">
    <property type="term" value="F:protein-phosphocysteine-D-fructose-phosphotransferase system transporter activity"/>
    <property type="evidence" value="ECO:0000250"/>
    <property type="project" value="UniProtKB"/>
</dbReference>
<dbReference type="GO" id="GO:0090563">
    <property type="term" value="F:protein-phosphocysteine-sugar phosphotransferase activity"/>
    <property type="evidence" value="ECO:0000318"/>
    <property type="project" value="GO_Central"/>
</dbReference>
<dbReference type="GO" id="GO:0009401">
    <property type="term" value="P:phosphoenolpyruvate-dependent sugar phosphotransferase system"/>
    <property type="evidence" value="ECO:0000250"/>
    <property type="project" value="UniProtKB"/>
</dbReference>
<dbReference type="CDD" id="cd05569">
    <property type="entry name" value="PTS_IIB_fructose"/>
    <property type="match status" value="1"/>
</dbReference>
<dbReference type="FunFam" id="3.40.50.2300:FF:000014">
    <property type="entry name" value="PTS system fructose-like transporter subunit IIB"/>
    <property type="match status" value="1"/>
</dbReference>
<dbReference type="Gene3D" id="3.40.50.2300">
    <property type="match status" value="1"/>
</dbReference>
<dbReference type="InterPro" id="IPR050864">
    <property type="entry name" value="Bacterial_PTS_Sugar_Transport"/>
</dbReference>
<dbReference type="InterPro" id="IPR036095">
    <property type="entry name" value="PTS_EIIB-like_sf"/>
</dbReference>
<dbReference type="InterPro" id="IPR013011">
    <property type="entry name" value="PTS_EIIB_2"/>
</dbReference>
<dbReference type="InterPro" id="IPR003501">
    <property type="entry name" value="PTS_EIIB_2/3"/>
</dbReference>
<dbReference type="InterPro" id="IPR003352">
    <property type="entry name" value="PTS_EIIC"/>
</dbReference>
<dbReference type="InterPro" id="IPR013014">
    <property type="entry name" value="PTS_EIIC_2"/>
</dbReference>
<dbReference type="InterPro" id="IPR003353">
    <property type="entry name" value="PTS_IIB_fruc"/>
</dbReference>
<dbReference type="InterPro" id="IPR006327">
    <property type="entry name" value="PTS_IIC_fruc"/>
</dbReference>
<dbReference type="NCBIfam" id="TIGR00829">
    <property type="entry name" value="FRU"/>
    <property type="match status" value="1"/>
</dbReference>
<dbReference type="NCBIfam" id="TIGR01427">
    <property type="entry name" value="PTS_IIC_fructo"/>
    <property type="match status" value="1"/>
</dbReference>
<dbReference type="PANTHER" id="PTHR30505">
    <property type="entry name" value="FRUCTOSE-LIKE PERMEASE"/>
    <property type="match status" value="1"/>
</dbReference>
<dbReference type="PANTHER" id="PTHR30505:SF0">
    <property type="entry name" value="FRUCTOSE-LIKE PTS SYSTEM EIIBC COMPONENT-RELATED"/>
    <property type="match status" value="1"/>
</dbReference>
<dbReference type="Pfam" id="PF02378">
    <property type="entry name" value="PTS_EIIC"/>
    <property type="match status" value="1"/>
</dbReference>
<dbReference type="Pfam" id="PF02302">
    <property type="entry name" value="PTS_IIB"/>
    <property type="match status" value="1"/>
</dbReference>
<dbReference type="SUPFAM" id="SSF52794">
    <property type="entry name" value="PTS system IIB component-like"/>
    <property type="match status" value="1"/>
</dbReference>
<dbReference type="PROSITE" id="PS51099">
    <property type="entry name" value="PTS_EIIB_TYPE_2"/>
    <property type="match status" value="1"/>
</dbReference>
<dbReference type="PROSITE" id="PS51104">
    <property type="entry name" value="PTS_EIIC_TYPE_2"/>
    <property type="match status" value="1"/>
</dbReference>
<feature type="chain" id="PRO_0000186509" description="PTS system fructose-specific EIIB'BC component">
    <location>
        <begin position="1"/>
        <end position="556"/>
    </location>
</feature>
<feature type="transmembrane region" description="Helical" evidence="4">
    <location>
        <begin position="237"/>
        <end position="257"/>
    </location>
</feature>
<feature type="transmembrane region" description="Helical" evidence="4">
    <location>
        <begin position="275"/>
        <end position="295"/>
    </location>
</feature>
<feature type="transmembrane region" description="Helical" evidence="4">
    <location>
        <begin position="302"/>
        <end position="322"/>
    </location>
</feature>
<feature type="transmembrane region" description="Helical" evidence="4">
    <location>
        <begin position="324"/>
        <end position="344"/>
    </location>
</feature>
<feature type="transmembrane region" description="Helical" evidence="4">
    <location>
        <begin position="349"/>
        <end position="369"/>
    </location>
</feature>
<feature type="transmembrane region" description="Helical" evidence="4">
    <location>
        <begin position="390"/>
        <end position="410"/>
    </location>
</feature>
<feature type="transmembrane region" description="Helical" evidence="4">
    <location>
        <begin position="431"/>
        <end position="451"/>
    </location>
</feature>
<feature type="transmembrane region" description="Helical" evidence="4">
    <location>
        <begin position="468"/>
        <end position="488"/>
    </location>
</feature>
<feature type="transmembrane region" description="Helical" evidence="4">
    <location>
        <begin position="490"/>
        <end position="510"/>
    </location>
</feature>
<feature type="transmembrane region" description="Helical" evidence="4">
    <location>
        <begin position="529"/>
        <end position="549"/>
    </location>
</feature>
<feature type="domain" description="PTS EIIB type-2 1" evidence="1">
    <location>
        <begin position="1"/>
        <end position="85"/>
    </location>
</feature>
<feature type="domain" description="PTS EIIB type-2 2" evidence="3">
    <location>
        <begin position="106"/>
        <end position="201"/>
    </location>
</feature>
<feature type="domain" description="PTS EIIC type-2" evidence="4">
    <location>
        <begin position="224"/>
        <end position="556"/>
    </location>
</feature>
<feature type="active site" description="Phosphocysteine intermediate; for EIIB activity" evidence="1 5">
    <location>
        <position position="112"/>
    </location>
</feature>
<feature type="modified residue" description="Phosphocysteine; by EIIA" evidence="3">
    <location>
        <position position="112"/>
    </location>
</feature>
<protein>
    <recommendedName>
        <fullName evidence="1">PTS system fructose-specific EIIB'BC component</fullName>
    </recommendedName>
    <alternativeName>
        <fullName evidence="1">EIIB'BC-Fru</fullName>
    </alternativeName>
    <domain>
        <recommendedName>
            <fullName evidence="1">PTS system fructose-specific EIIB component</fullName>
            <ecNumber evidence="1">2.7.1.202</ecNumber>
        </recommendedName>
        <alternativeName>
            <fullName evidence="1">EIII-Fru</fullName>
        </alternativeName>
        <alternativeName>
            <fullName evidence="1">Fructose-specific phosphotransferase enzyme IIB component</fullName>
        </alternativeName>
    </domain>
    <domain>
        <recommendedName>
            <fullName evidence="1">PTS system fructose-specific EIIC component</fullName>
        </recommendedName>
        <alternativeName>
            <fullName evidence="1">Fructose permease IIC component</fullName>
        </alternativeName>
    </domain>
</protein>
<proteinExistence type="inferred from homology"/>
<comment type="function">
    <text evidence="1">The phosphoenolpyruvate-dependent sugar phosphotransferase system (sugar PTS), a major carbohydrate active transport system, catalyzes the phosphorylation of incoming sugar substrates concomitantly with their translocation across the cell membrane. The enzyme II FruAB PTS system is involved in fructose transport.</text>
</comment>
<comment type="catalytic activity">
    <reaction evidence="1">
        <text>D-fructose(out) + N(pros)-phospho-L-histidyl-[protein] = D-fructose 1-phosphate(in) + L-histidyl-[protein]</text>
        <dbReference type="Rhea" id="RHEA:49252"/>
        <dbReference type="Rhea" id="RHEA-COMP:9745"/>
        <dbReference type="Rhea" id="RHEA-COMP:9746"/>
        <dbReference type="ChEBI" id="CHEBI:29979"/>
        <dbReference type="ChEBI" id="CHEBI:37721"/>
        <dbReference type="ChEBI" id="CHEBI:58674"/>
        <dbReference type="ChEBI" id="CHEBI:64837"/>
        <dbReference type="EC" id="2.7.1.202"/>
    </reaction>
</comment>
<comment type="subcellular location">
    <subcellularLocation>
        <location evidence="1 4">Cell inner membrane</location>
        <topology evidence="1 4">Multi-pass membrane protein</topology>
    </subcellularLocation>
</comment>
<comment type="induction">
    <text evidence="2">By fructose.</text>
</comment>
<comment type="domain">
    <text evidence="3">The PTS EIIB type-2 domain is phosphorylated by phospho-EIIA on a cysteinyl residue. Then, it transfers the phosphoryl group to the sugar substrate concomitantly with the sugar uptake processed by the PTS EIIC type-2 domain.</text>
</comment>
<comment type="domain">
    <text evidence="1">In the N-terminal, the PTS system fructose-specific possesses a duplicated EIIB domain (EIIB' domain) which lacks the active site and functions to facilitate phosphoryl transfer between the EIIA domain of diphosphoryl transfer protein (DTP) and the EIIB domain. The presence of the EIIB' domain is required for normal high affinity recognition of DTP by the PTS system fructose-specific as well as for normal rates of phosphoryl transfer between the EIIA and EIIB domains of DTP and PTS system fructose-specific, respectively.</text>
</comment>
<comment type="domain">
    <text evidence="4">The EIIC type-2 domain forms the PTS system translocation channel and contains the specific substrate-binding site.</text>
</comment>
<name>PTFBC_HAEIN</name>
<organism>
    <name type="scientific">Haemophilus influenzae (strain ATCC 51907 / DSM 11121 / KW20 / Rd)</name>
    <dbReference type="NCBI Taxonomy" id="71421"/>
    <lineage>
        <taxon>Bacteria</taxon>
        <taxon>Pseudomonadati</taxon>
        <taxon>Pseudomonadota</taxon>
        <taxon>Gammaproteobacteria</taxon>
        <taxon>Pasteurellales</taxon>
        <taxon>Pasteurellaceae</taxon>
        <taxon>Haemophilus</taxon>
    </lineage>
</organism>